<gene>
    <name evidence="1" type="primary">coaD</name>
    <name type="ordered locus">BVU_1236</name>
</gene>
<comment type="function">
    <text evidence="1">Reversibly transfers an adenylyl group from ATP to 4'-phosphopantetheine, yielding dephospho-CoA (dPCoA) and pyrophosphate.</text>
</comment>
<comment type="catalytic activity">
    <reaction evidence="1">
        <text>(R)-4'-phosphopantetheine + ATP + H(+) = 3'-dephospho-CoA + diphosphate</text>
        <dbReference type="Rhea" id="RHEA:19801"/>
        <dbReference type="ChEBI" id="CHEBI:15378"/>
        <dbReference type="ChEBI" id="CHEBI:30616"/>
        <dbReference type="ChEBI" id="CHEBI:33019"/>
        <dbReference type="ChEBI" id="CHEBI:57328"/>
        <dbReference type="ChEBI" id="CHEBI:61723"/>
        <dbReference type="EC" id="2.7.7.3"/>
    </reaction>
</comment>
<comment type="cofactor">
    <cofactor evidence="1">
        <name>Mg(2+)</name>
        <dbReference type="ChEBI" id="CHEBI:18420"/>
    </cofactor>
</comment>
<comment type="pathway">
    <text evidence="1">Cofactor biosynthesis; coenzyme A biosynthesis; CoA from (R)-pantothenate: step 4/5.</text>
</comment>
<comment type="subunit">
    <text evidence="1">Homohexamer.</text>
</comment>
<comment type="subcellular location">
    <subcellularLocation>
        <location evidence="1">Cytoplasm</location>
    </subcellularLocation>
</comment>
<comment type="similarity">
    <text evidence="1">Belongs to the bacterial CoaD family.</text>
</comment>
<sequence>MRRAIFPGTFDPFTIGHYSVVKRALTFMDEVVIGIGINENKKTWFPTEKRVEMIEKLFADDPRVKVDAYDCLTIDFARAKEAQFIVRGIRTVHDFEYEETIADINRKLAGIETILLFTEPELTSISSTIVRELLQFGKDVTPFLPEGMKID</sequence>
<proteinExistence type="inferred from homology"/>
<feature type="chain" id="PRO_1000011095" description="Phosphopantetheine adenylyltransferase">
    <location>
        <begin position="1"/>
        <end position="151"/>
    </location>
</feature>
<feature type="binding site" evidence="1">
    <location>
        <begin position="9"/>
        <end position="10"/>
    </location>
    <ligand>
        <name>ATP</name>
        <dbReference type="ChEBI" id="CHEBI:30616"/>
    </ligand>
</feature>
<feature type="binding site" evidence="1">
    <location>
        <position position="9"/>
    </location>
    <ligand>
        <name>substrate</name>
    </ligand>
</feature>
<feature type="binding site" evidence="1">
    <location>
        <position position="17"/>
    </location>
    <ligand>
        <name>ATP</name>
        <dbReference type="ChEBI" id="CHEBI:30616"/>
    </ligand>
</feature>
<feature type="binding site" evidence="1">
    <location>
        <position position="41"/>
    </location>
    <ligand>
        <name>substrate</name>
    </ligand>
</feature>
<feature type="binding site" evidence="1">
    <location>
        <position position="73"/>
    </location>
    <ligand>
        <name>substrate</name>
    </ligand>
</feature>
<feature type="binding site" evidence="1">
    <location>
        <position position="87"/>
    </location>
    <ligand>
        <name>substrate</name>
    </ligand>
</feature>
<feature type="binding site" evidence="1">
    <location>
        <begin position="88"/>
        <end position="90"/>
    </location>
    <ligand>
        <name>ATP</name>
        <dbReference type="ChEBI" id="CHEBI:30616"/>
    </ligand>
</feature>
<feature type="binding site" evidence="1">
    <location>
        <position position="98"/>
    </location>
    <ligand>
        <name>ATP</name>
        <dbReference type="ChEBI" id="CHEBI:30616"/>
    </ligand>
</feature>
<feature type="binding site" evidence="1">
    <location>
        <begin position="122"/>
        <end position="128"/>
    </location>
    <ligand>
        <name>ATP</name>
        <dbReference type="ChEBI" id="CHEBI:30616"/>
    </ligand>
</feature>
<feature type="site" description="Transition state stabilizer" evidence="1">
    <location>
        <position position="17"/>
    </location>
</feature>
<evidence type="ECO:0000255" key="1">
    <source>
        <dbReference type="HAMAP-Rule" id="MF_00151"/>
    </source>
</evidence>
<name>COAD_PHOV8</name>
<protein>
    <recommendedName>
        <fullName evidence="1">Phosphopantetheine adenylyltransferase</fullName>
        <ecNumber evidence="1">2.7.7.3</ecNumber>
    </recommendedName>
    <alternativeName>
        <fullName evidence="1">Dephospho-CoA pyrophosphorylase</fullName>
    </alternativeName>
    <alternativeName>
        <fullName evidence="1">Pantetheine-phosphate adenylyltransferase</fullName>
        <shortName evidence="1">PPAT</shortName>
    </alternativeName>
</protein>
<dbReference type="EC" id="2.7.7.3" evidence="1"/>
<dbReference type="EMBL" id="CP000139">
    <property type="protein sequence ID" value="ABR38926.1"/>
    <property type="molecule type" value="Genomic_DNA"/>
</dbReference>
<dbReference type="RefSeq" id="WP_005849847.1">
    <property type="nucleotide sequence ID" value="NZ_JANSWM010000092.1"/>
</dbReference>
<dbReference type="SMR" id="A6KZR2"/>
<dbReference type="STRING" id="435590.BVU_1236"/>
<dbReference type="PaxDb" id="435590-BVU_1236"/>
<dbReference type="GeneID" id="5302202"/>
<dbReference type="KEGG" id="bvu:BVU_1236"/>
<dbReference type="eggNOG" id="COG0669">
    <property type="taxonomic scope" value="Bacteria"/>
</dbReference>
<dbReference type="HOGENOM" id="CLU_100149_1_1_10"/>
<dbReference type="BioCyc" id="BVUL435590:G1G59-1286-MONOMER"/>
<dbReference type="UniPathway" id="UPA00241">
    <property type="reaction ID" value="UER00355"/>
</dbReference>
<dbReference type="Proteomes" id="UP000002861">
    <property type="component" value="Chromosome"/>
</dbReference>
<dbReference type="GO" id="GO:0005737">
    <property type="term" value="C:cytoplasm"/>
    <property type="evidence" value="ECO:0007669"/>
    <property type="project" value="UniProtKB-SubCell"/>
</dbReference>
<dbReference type="GO" id="GO:0005524">
    <property type="term" value="F:ATP binding"/>
    <property type="evidence" value="ECO:0007669"/>
    <property type="project" value="UniProtKB-KW"/>
</dbReference>
<dbReference type="GO" id="GO:0004595">
    <property type="term" value="F:pantetheine-phosphate adenylyltransferase activity"/>
    <property type="evidence" value="ECO:0007669"/>
    <property type="project" value="UniProtKB-UniRule"/>
</dbReference>
<dbReference type="GO" id="GO:0015937">
    <property type="term" value="P:coenzyme A biosynthetic process"/>
    <property type="evidence" value="ECO:0007669"/>
    <property type="project" value="UniProtKB-UniRule"/>
</dbReference>
<dbReference type="Gene3D" id="3.40.50.620">
    <property type="entry name" value="HUPs"/>
    <property type="match status" value="1"/>
</dbReference>
<dbReference type="HAMAP" id="MF_00151">
    <property type="entry name" value="PPAT_bact"/>
    <property type="match status" value="1"/>
</dbReference>
<dbReference type="InterPro" id="IPR004821">
    <property type="entry name" value="Cyt_trans-like"/>
</dbReference>
<dbReference type="InterPro" id="IPR001980">
    <property type="entry name" value="PPAT"/>
</dbReference>
<dbReference type="InterPro" id="IPR014729">
    <property type="entry name" value="Rossmann-like_a/b/a_fold"/>
</dbReference>
<dbReference type="NCBIfam" id="TIGR01510">
    <property type="entry name" value="coaD_prev_kdtB"/>
    <property type="match status" value="1"/>
</dbReference>
<dbReference type="NCBIfam" id="TIGR00125">
    <property type="entry name" value="cyt_tran_rel"/>
    <property type="match status" value="1"/>
</dbReference>
<dbReference type="PANTHER" id="PTHR21342">
    <property type="entry name" value="PHOSPHOPANTETHEINE ADENYLYLTRANSFERASE"/>
    <property type="match status" value="1"/>
</dbReference>
<dbReference type="PANTHER" id="PTHR21342:SF1">
    <property type="entry name" value="PHOSPHOPANTETHEINE ADENYLYLTRANSFERASE"/>
    <property type="match status" value="1"/>
</dbReference>
<dbReference type="Pfam" id="PF01467">
    <property type="entry name" value="CTP_transf_like"/>
    <property type="match status" value="1"/>
</dbReference>
<dbReference type="PRINTS" id="PR01020">
    <property type="entry name" value="LPSBIOSNTHSS"/>
</dbReference>
<dbReference type="SUPFAM" id="SSF52374">
    <property type="entry name" value="Nucleotidylyl transferase"/>
    <property type="match status" value="1"/>
</dbReference>
<organism>
    <name type="scientific">Phocaeicola vulgatus (strain ATCC 8482 / DSM 1447 / JCM 5826 / CCUG 4940 / NBRC 14291 / NCTC 11154)</name>
    <name type="common">Bacteroides vulgatus</name>
    <dbReference type="NCBI Taxonomy" id="435590"/>
    <lineage>
        <taxon>Bacteria</taxon>
        <taxon>Pseudomonadati</taxon>
        <taxon>Bacteroidota</taxon>
        <taxon>Bacteroidia</taxon>
        <taxon>Bacteroidales</taxon>
        <taxon>Bacteroidaceae</taxon>
        <taxon>Phocaeicola</taxon>
    </lineage>
</organism>
<reference key="1">
    <citation type="journal article" date="2007" name="PLoS Biol.">
        <title>Evolution of symbiotic bacteria in the distal human intestine.</title>
        <authorList>
            <person name="Xu J."/>
            <person name="Mahowald M.A."/>
            <person name="Ley R.E."/>
            <person name="Lozupone C.A."/>
            <person name="Hamady M."/>
            <person name="Martens E.C."/>
            <person name="Henrissat B."/>
            <person name="Coutinho P.M."/>
            <person name="Minx P."/>
            <person name="Latreille P."/>
            <person name="Cordum H."/>
            <person name="Van Brunt A."/>
            <person name="Kim K."/>
            <person name="Fulton R.S."/>
            <person name="Fulton L.A."/>
            <person name="Clifton S.W."/>
            <person name="Wilson R.K."/>
            <person name="Knight R.D."/>
            <person name="Gordon J.I."/>
        </authorList>
    </citation>
    <scope>NUCLEOTIDE SEQUENCE [LARGE SCALE GENOMIC DNA]</scope>
    <source>
        <strain>ATCC 8482 / DSM 1447 / JCM 5826 / CCUG 4940 / NBRC 14291 / NCTC 11154</strain>
    </source>
</reference>
<accession>A6KZR2</accession>
<keyword id="KW-0067">ATP-binding</keyword>
<keyword id="KW-0173">Coenzyme A biosynthesis</keyword>
<keyword id="KW-0963">Cytoplasm</keyword>
<keyword id="KW-0460">Magnesium</keyword>
<keyword id="KW-0547">Nucleotide-binding</keyword>
<keyword id="KW-0548">Nucleotidyltransferase</keyword>
<keyword id="KW-0808">Transferase</keyword>